<comment type="function">
    <text evidence="2">This multifunctional protein catalyzes the formation, breakage and rearrangement of disulfide bonds. At the cell surface, seems to act as a reductase that cleaves disulfide bonds of proteins attached to the cell. May therefore cause structural modifications of exofacial proteins. Inside the cell, seems to form/rearrange disulfide bonds of nascent proteins. At high concentrations and following phosphorylation by FAM20C, functions as a chaperone that inhibits aggregation of misfolded proteins. At low concentrations, facilitates aggregation (anti-chaperone activity). May be involved with other chaperones in the structural modification of the TG precursor in hormone biogenesis. Also acts as a structural subunit of various enzymes such as prolyl 4-hydroxylase and microsomal triacylglycerol transfer protein MTTP. Receptor for LGALS9; the interaction retains P4HB at the cell surface of Th2 T helper cells, increasing disulfide reductase activity at the plasma membrane, altering the plasma membrane redox state and enhancing cell migration.</text>
</comment>
<comment type="catalytic activity">
    <reaction evidence="2">
        <text>Catalyzes the rearrangement of -S-S- bonds in proteins.</text>
        <dbReference type="EC" id="5.3.4.1"/>
    </reaction>
</comment>
<comment type="subunit">
    <text evidence="1 2 3">Heterodimer; heterodimerizes with the protein microsomal triglyceride transfer MTTP. Homodimer. Homodimer. Monomers and homotetramers may also occur. Interacts with P4HA2, forming a heterotetramer consisting of 2 alpha subunits (P4HA2) and 2 beta (P4HB), where P4HB plays the role of a structural subunit; this tetramer catalyzes the formation of 4-hydroxyproline in collagen (By similarity). Also constitutes the structural subunit of the microsomal triacylglycerol transfer protein MTTP in mammalian cells. Stabilizes both enzymes and retain them in the ER without contributing to the catalytic activity. Binds UBQLN1. Interacts with ERO1B. Interacts with ILDR2 (By similarity). Interacts with ERN1/IRE1A (via N-terminus); the interaction is enhanced by phosphorylation of P4HB by FAM20C in response to endoplasmic reticulum stress and results in attenuation of ERN1 activity (By similarity).</text>
</comment>
<comment type="subcellular location">
    <subcellularLocation>
        <location evidence="2">Endoplasmic reticulum</location>
    </subcellularLocation>
    <subcellularLocation>
        <location evidence="2">Endoplasmic reticulum lumen</location>
    </subcellularLocation>
    <subcellularLocation>
        <location evidence="2">Melanosome</location>
    </subcellularLocation>
    <subcellularLocation>
        <location evidence="3">Cell membrane</location>
        <topology evidence="7">Peripheral membrane protein</topology>
    </subcellularLocation>
    <text evidence="2">Highly abundant. In some cell types, seems to be also secreted or associated with the plasma membrane, where it undergoes constant shedding and replacement from intracellular sources. Localizes near CD4-enriched regions on lymphoid cell surfaces. Colocalizes with MTTP in the endoplasmic reticulum.</text>
</comment>
<comment type="PTM">
    <text evidence="2">Phosphorylation of Ser-359 by FAM20C is induced by endoplasmic reticulum stress and results in a functional switch from oxidoreductase to molecular chaperone. It also promotes interaction with ERN1.</text>
</comment>
<comment type="similarity">
    <text evidence="7">Belongs to the protein disulfide isomerase family.</text>
</comment>
<gene>
    <name type="primary">P4HB</name>
    <name type="synonym">PDIA1</name>
</gene>
<accession>Q8R4U2</accession>
<sequence length="509" mass="57010">MLSRSLLCLALAWVARVGADAPEEEDNVLVLKKSNFAEALAAHNYLLVEFYAPWCGHCKALAPEYAKAAAKLKAEGSEIRLAKVDATEESDLAQQYGVRGYPTIKFFKNGDTASPKEYTAGREADDIVNWLKKRTGPAATTLSDTAAAETLIDSSEVAVIGFFKDVESDSAKQFLLAAEAVDDIPFGITSNSGVFSKYQLDKDGVVLFKKFDEGRNNFEGEVTKEKLLDFIKHNQLPLVIEFTEQTAPKIFGGEIKTHILLFLPKSVSDYDGKLGNFKKAAEGFKGKILFIFIDSDHTDNQRILEFFGLKKEECPAVRLITLEEEMTKYKPESDELTAEKITEFCHRFLEGKIKPHLMSQELPEDWDKQPVKVLVGKNFEEVAFDEKKNVFVEFYAPWCGHCKQLAPIWDKLGETYKDHENIIIAKMDSTANEVEAVKVHSFPTLKFFPATADRTVIDYNGERTLDGFKKFLESGGQDGAGDDDDVDLEEALEPDMEEDDDQKAVKDEL</sequence>
<dbReference type="EC" id="5.3.4.1" evidence="2"/>
<dbReference type="EMBL" id="AF364317">
    <property type="protein sequence ID" value="AAM00284.1"/>
    <property type="molecule type" value="mRNA"/>
</dbReference>
<dbReference type="RefSeq" id="NP_001233622.1">
    <property type="nucleotide sequence ID" value="NM_001246693.1"/>
</dbReference>
<dbReference type="SMR" id="Q8R4U2"/>
<dbReference type="PaxDb" id="10029-XP_007634117.1"/>
<dbReference type="GeneID" id="100689433"/>
<dbReference type="KEGG" id="cge:100689433"/>
<dbReference type="CTD" id="5034"/>
<dbReference type="eggNOG" id="KOG0190">
    <property type="taxonomic scope" value="Eukaryota"/>
</dbReference>
<dbReference type="OrthoDB" id="72053at2759"/>
<dbReference type="PRO" id="PR:Q8R4U2"/>
<dbReference type="Proteomes" id="UP000694386">
    <property type="component" value="Unplaced"/>
</dbReference>
<dbReference type="Proteomes" id="UP001108280">
    <property type="component" value="Chromosome 7"/>
</dbReference>
<dbReference type="GO" id="GO:0005783">
    <property type="term" value="C:endoplasmic reticulum"/>
    <property type="evidence" value="ECO:0000250"/>
    <property type="project" value="UniProtKB"/>
</dbReference>
<dbReference type="GO" id="GO:0005788">
    <property type="term" value="C:endoplasmic reticulum lumen"/>
    <property type="evidence" value="ECO:0007669"/>
    <property type="project" value="UniProtKB-SubCell"/>
</dbReference>
<dbReference type="GO" id="GO:0009897">
    <property type="term" value="C:external side of plasma membrane"/>
    <property type="evidence" value="ECO:0007669"/>
    <property type="project" value="TreeGrafter"/>
</dbReference>
<dbReference type="GO" id="GO:0042470">
    <property type="term" value="C:melanosome"/>
    <property type="evidence" value="ECO:0007669"/>
    <property type="project" value="UniProtKB-SubCell"/>
</dbReference>
<dbReference type="GO" id="GO:0003756">
    <property type="term" value="F:protein disulfide isomerase activity"/>
    <property type="evidence" value="ECO:0007669"/>
    <property type="project" value="UniProtKB-EC"/>
</dbReference>
<dbReference type="GO" id="GO:0046982">
    <property type="term" value="F:protein heterodimerization activity"/>
    <property type="evidence" value="ECO:0000250"/>
    <property type="project" value="UniProtKB"/>
</dbReference>
<dbReference type="GO" id="GO:0006457">
    <property type="term" value="P:protein folding"/>
    <property type="evidence" value="ECO:0007669"/>
    <property type="project" value="TreeGrafter"/>
</dbReference>
<dbReference type="GO" id="GO:0034976">
    <property type="term" value="P:response to endoplasmic reticulum stress"/>
    <property type="evidence" value="ECO:0007669"/>
    <property type="project" value="TreeGrafter"/>
</dbReference>
<dbReference type="CDD" id="cd02961">
    <property type="entry name" value="PDI_a_family"/>
    <property type="match status" value="1"/>
</dbReference>
<dbReference type="CDD" id="cd02995">
    <property type="entry name" value="PDI_a_PDI_a'_C"/>
    <property type="match status" value="1"/>
</dbReference>
<dbReference type="CDD" id="cd02982">
    <property type="entry name" value="PDI_b'_family"/>
    <property type="match status" value="1"/>
</dbReference>
<dbReference type="CDD" id="cd02981">
    <property type="entry name" value="PDI_b_family"/>
    <property type="match status" value="1"/>
</dbReference>
<dbReference type="FunFam" id="3.40.30.10:FF:000023">
    <property type="entry name" value="Protein disulfide-isomerase"/>
    <property type="match status" value="1"/>
</dbReference>
<dbReference type="FunFam" id="3.40.30.10:FF:000030">
    <property type="entry name" value="Protein disulfide-isomerase"/>
    <property type="match status" value="1"/>
</dbReference>
<dbReference type="FunFam" id="3.40.30.10:FF:000110">
    <property type="entry name" value="Protein disulfide-isomerase"/>
    <property type="match status" value="1"/>
</dbReference>
<dbReference type="FunFam" id="3.40.30.10:FF:000027">
    <property type="entry name" value="protein disulfide-isomerase A2"/>
    <property type="match status" value="1"/>
</dbReference>
<dbReference type="Gene3D" id="3.40.30.10">
    <property type="entry name" value="Glutaredoxin"/>
    <property type="match status" value="4"/>
</dbReference>
<dbReference type="InterPro" id="IPR005788">
    <property type="entry name" value="PDI_thioredoxin-like_dom"/>
</dbReference>
<dbReference type="InterPro" id="IPR005792">
    <property type="entry name" value="Prot_disulphide_isomerase"/>
</dbReference>
<dbReference type="InterPro" id="IPR036249">
    <property type="entry name" value="Thioredoxin-like_sf"/>
</dbReference>
<dbReference type="InterPro" id="IPR017937">
    <property type="entry name" value="Thioredoxin_CS"/>
</dbReference>
<dbReference type="InterPro" id="IPR013766">
    <property type="entry name" value="Thioredoxin_domain"/>
</dbReference>
<dbReference type="NCBIfam" id="TIGR01130">
    <property type="entry name" value="ER_PDI_fam"/>
    <property type="match status" value="1"/>
</dbReference>
<dbReference type="NCBIfam" id="TIGR01126">
    <property type="entry name" value="pdi_dom"/>
    <property type="match status" value="2"/>
</dbReference>
<dbReference type="PANTHER" id="PTHR18929">
    <property type="entry name" value="PROTEIN DISULFIDE ISOMERASE"/>
    <property type="match status" value="1"/>
</dbReference>
<dbReference type="PANTHER" id="PTHR18929:SF101">
    <property type="entry name" value="PROTEIN DISULFIDE-ISOMERASE"/>
    <property type="match status" value="1"/>
</dbReference>
<dbReference type="Pfam" id="PF00085">
    <property type="entry name" value="Thioredoxin"/>
    <property type="match status" value="2"/>
</dbReference>
<dbReference type="Pfam" id="PF13848">
    <property type="entry name" value="Thioredoxin_6"/>
    <property type="match status" value="1"/>
</dbReference>
<dbReference type="PRINTS" id="PR00421">
    <property type="entry name" value="THIOREDOXIN"/>
</dbReference>
<dbReference type="SUPFAM" id="SSF52833">
    <property type="entry name" value="Thioredoxin-like"/>
    <property type="match status" value="4"/>
</dbReference>
<dbReference type="PROSITE" id="PS00014">
    <property type="entry name" value="ER_TARGET"/>
    <property type="match status" value="1"/>
</dbReference>
<dbReference type="PROSITE" id="PS00194">
    <property type="entry name" value="THIOREDOXIN_1"/>
    <property type="match status" value="2"/>
</dbReference>
<dbReference type="PROSITE" id="PS51352">
    <property type="entry name" value="THIOREDOXIN_2"/>
    <property type="match status" value="2"/>
</dbReference>
<name>PDIA1_CRIGR</name>
<feature type="signal peptide" evidence="1">
    <location>
        <begin position="1"/>
        <end position="19"/>
    </location>
</feature>
<feature type="chain" id="PRO_0000034194" description="Protein disulfide-isomerase">
    <location>
        <begin position="20"/>
        <end position="509"/>
    </location>
</feature>
<feature type="domain" description="Thioredoxin 1" evidence="4">
    <location>
        <begin position="20"/>
        <end position="136"/>
    </location>
</feature>
<feature type="domain" description="Thioredoxin 2" evidence="4">
    <location>
        <begin position="335"/>
        <end position="477"/>
    </location>
</feature>
<feature type="region of interest" description="Disordered" evidence="6">
    <location>
        <begin position="473"/>
        <end position="509"/>
    </location>
</feature>
<feature type="short sequence motif" description="Prevents secretion from ER" evidence="5">
    <location>
        <begin position="506"/>
        <end position="509"/>
    </location>
</feature>
<feature type="compositionally biased region" description="Acidic residues" evidence="6">
    <location>
        <begin position="480"/>
        <end position="501"/>
    </location>
</feature>
<feature type="active site" description="Nucleophile" evidence="1">
    <location>
        <position position="55"/>
    </location>
</feature>
<feature type="active site" description="Nucleophile" evidence="1">
    <location>
        <position position="58"/>
    </location>
</feature>
<feature type="active site" description="Nucleophile" evidence="1">
    <location>
        <position position="399"/>
    </location>
</feature>
<feature type="active site" description="Nucleophile" evidence="1">
    <location>
        <position position="402"/>
    </location>
</feature>
<feature type="site" description="Contributes to redox potential value" evidence="1">
    <location>
        <position position="56"/>
    </location>
</feature>
<feature type="site" description="Contributes to redox potential value" evidence="1">
    <location>
        <position position="57"/>
    </location>
</feature>
<feature type="site" description="Lowers pKa of C-terminal Cys of first active site" evidence="1">
    <location>
        <position position="122"/>
    </location>
</feature>
<feature type="site" description="Contributes to redox potential value" evidence="1">
    <location>
        <position position="400"/>
    </location>
</feature>
<feature type="site" description="Contributes to redox potential value" evidence="1">
    <location>
        <position position="401"/>
    </location>
</feature>
<feature type="site" description="Lowers pKa of C-terminal Cys of second active site" evidence="1">
    <location>
        <position position="463"/>
    </location>
</feature>
<feature type="modified residue" description="N6-acetyllysine" evidence="3">
    <location>
        <position position="202"/>
    </location>
</feature>
<feature type="modified residue" description="N6-succinyllysine" evidence="3">
    <location>
        <position position="224"/>
    </location>
</feature>
<feature type="modified residue" description="N6-succinyllysine" evidence="3">
    <location>
        <position position="273"/>
    </location>
</feature>
<feature type="modified residue" description="Phosphoserine" evidence="2">
    <location>
        <position position="333"/>
    </location>
</feature>
<feature type="modified residue" description="Phosphoserine" evidence="2">
    <location>
        <position position="359"/>
    </location>
</feature>
<feature type="modified residue" description="Phosphoserine" evidence="2">
    <location>
        <position position="429"/>
    </location>
</feature>
<feature type="disulfide bond" description="Redox-active" evidence="4">
    <location>
        <begin position="55"/>
        <end position="58"/>
    </location>
</feature>
<feature type="disulfide bond" description="Redox-active" evidence="4">
    <location>
        <begin position="399"/>
        <end position="402"/>
    </location>
</feature>
<evidence type="ECO:0000250" key="1"/>
<evidence type="ECO:0000250" key="2">
    <source>
        <dbReference type="UniProtKB" id="P07237"/>
    </source>
</evidence>
<evidence type="ECO:0000250" key="3">
    <source>
        <dbReference type="UniProtKB" id="P09103"/>
    </source>
</evidence>
<evidence type="ECO:0000255" key="4">
    <source>
        <dbReference type="PROSITE-ProRule" id="PRU00691"/>
    </source>
</evidence>
<evidence type="ECO:0000255" key="5">
    <source>
        <dbReference type="PROSITE-ProRule" id="PRU10138"/>
    </source>
</evidence>
<evidence type="ECO:0000256" key="6">
    <source>
        <dbReference type="SAM" id="MobiDB-lite"/>
    </source>
</evidence>
<evidence type="ECO:0000305" key="7"/>
<proteinExistence type="evidence at transcript level"/>
<keyword id="KW-0007">Acetylation</keyword>
<keyword id="KW-1003">Cell membrane</keyword>
<keyword id="KW-0143">Chaperone</keyword>
<keyword id="KW-1015">Disulfide bond</keyword>
<keyword id="KW-0256">Endoplasmic reticulum</keyword>
<keyword id="KW-0413">Isomerase</keyword>
<keyword id="KW-0472">Membrane</keyword>
<keyword id="KW-0597">Phosphoprotein</keyword>
<keyword id="KW-0676">Redox-active center</keyword>
<keyword id="KW-0677">Repeat</keyword>
<keyword id="KW-0732">Signal</keyword>
<protein>
    <recommendedName>
        <fullName>Protein disulfide-isomerase</fullName>
        <shortName>PDI</shortName>
        <ecNumber evidence="2">5.3.4.1</ecNumber>
    </recommendedName>
    <alternativeName>
        <fullName>Prolyl 4-hydroxylase subunit beta</fullName>
    </alternativeName>
    <alternativeName>
        <fullName>p58</fullName>
    </alternativeName>
</protein>
<organism>
    <name type="scientific">Cricetulus griseus</name>
    <name type="common">Chinese hamster</name>
    <name type="synonym">Cricetulus barabensis griseus</name>
    <dbReference type="NCBI Taxonomy" id="10029"/>
    <lineage>
        <taxon>Eukaryota</taxon>
        <taxon>Metazoa</taxon>
        <taxon>Chordata</taxon>
        <taxon>Craniata</taxon>
        <taxon>Vertebrata</taxon>
        <taxon>Euteleostomi</taxon>
        <taxon>Mammalia</taxon>
        <taxon>Eutheria</taxon>
        <taxon>Euarchontoglires</taxon>
        <taxon>Glires</taxon>
        <taxon>Rodentia</taxon>
        <taxon>Myomorpha</taxon>
        <taxon>Muroidea</taxon>
        <taxon>Cricetidae</taxon>
        <taxon>Cricetinae</taxon>
        <taxon>Cricetulus</taxon>
    </lineage>
</organism>
<reference key="1">
    <citation type="journal article" date="2002" name="Biochim. Biophys. Acta">
        <title>Protein-disulfide isomerase is a component of an NBD-cholesterol monomerizing protein complex from hamster small intestine.</title>
        <authorList>
            <person name="Cai T.-Q."/>
            <person name="Guo Q."/>
            <person name="Wong B."/>
            <person name="Milot D."/>
            <person name="Zhang L."/>
            <person name="Wright S.D."/>
        </authorList>
    </citation>
    <scope>NUCLEOTIDE SEQUENCE [MRNA]</scope>
    <source>
        <tissue>Small intestine</tissue>
    </source>
</reference>